<keyword id="KW-0507">mRNA processing</keyword>
<keyword id="KW-0508">mRNA splicing</keyword>
<keyword id="KW-0539">Nucleus</keyword>
<keyword id="KW-1185">Reference proteome</keyword>
<keyword id="KW-0747">Spliceosome</keyword>
<evidence type="ECO:0000250" key="1"/>
<evidence type="ECO:0000255" key="2">
    <source>
        <dbReference type="PROSITE-ProRule" id="PRU00092"/>
    </source>
</evidence>
<evidence type="ECO:0000256" key="3">
    <source>
        <dbReference type="SAM" id="MobiDB-lite"/>
    </source>
</evidence>
<evidence type="ECO:0000305" key="4"/>
<name>SPP2_ASPFU</name>
<reference key="1">
    <citation type="journal article" date="2005" name="Nature">
        <title>Genomic sequence of the pathogenic and allergenic filamentous fungus Aspergillus fumigatus.</title>
        <authorList>
            <person name="Nierman W.C."/>
            <person name="Pain A."/>
            <person name="Anderson M.J."/>
            <person name="Wortman J.R."/>
            <person name="Kim H.S."/>
            <person name="Arroyo J."/>
            <person name="Berriman M."/>
            <person name="Abe K."/>
            <person name="Archer D.B."/>
            <person name="Bermejo C."/>
            <person name="Bennett J.W."/>
            <person name="Bowyer P."/>
            <person name="Chen D."/>
            <person name="Collins M."/>
            <person name="Coulsen R."/>
            <person name="Davies R."/>
            <person name="Dyer P.S."/>
            <person name="Farman M.L."/>
            <person name="Fedorova N."/>
            <person name="Fedorova N.D."/>
            <person name="Feldblyum T.V."/>
            <person name="Fischer R."/>
            <person name="Fosker N."/>
            <person name="Fraser A."/>
            <person name="Garcia J.L."/>
            <person name="Garcia M.J."/>
            <person name="Goble A."/>
            <person name="Goldman G.H."/>
            <person name="Gomi K."/>
            <person name="Griffith-Jones S."/>
            <person name="Gwilliam R."/>
            <person name="Haas B.J."/>
            <person name="Haas H."/>
            <person name="Harris D.E."/>
            <person name="Horiuchi H."/>
            <person name="Huang J."/>
            <person name="Humphray S."/>
            <person name="Jimenez J."/>
            <person name="Keller N."/>
            <person name="Khouri H."/>
            <person name="Kitamoto K."/>
            <person name="Kobayashi T."/>
            <person name="Konzack S."/>
            <person name="Kulkarni R."/>
            <person name="Kumagai T."/>
            <person name="Lafton A."/>
            <person name="Latge J.-P."/>
            <person name="Li W."/>
            <person name="Lord A."/>
            <person name="Lu C."/>
            <person name="Majoros W.H."/>
            <person name="May G.S."/>
            <person name="Miller B.L."/>
            <person name="Mohamoud Y."/>
            <person name="Molina M."/>
            <person name="Monod M."/>
            <person name="Mouyna I."/>
            <person name="Mulligan S."/>
            <person name="Murphy L.D."/>
            <person name="O'Neil S."/>
            <person name="Paulsen I."/>
            <person name="Penalva M.A."/>
            <person name="Pertea M."/>
            <person name="Price C."/>
            <person name="Pritchard B.L."/>
            <person name="Quail M.A."/>
            <person name="Rabbinowitsch E."/>
            <person name="Rawlins N."/>
            <person name="Rajandream M.A."/>
            <person name="Reichard U."/>
            <person name="Renauld H."/>
            <person name="Robson G.D."/>
            <person name="Rodriguez de Cordoba S."/>
            <person name="Rodriguez-Pena J.M."/>
            <person name="Ronning C.M."/>
            <person name="Rutter S."/>
            <person name="Salzberg S.L."/>
            <person name="Sanchez M."/>
            <person name="Sanchez-Ferrero J.C."/>
            <person name="Saunders D."/>
            <person name="Seeger K."/>
            <person name="Squares R."/>
            <person name="Squares S."/>
            <person name="Takeuchi M."/>
            <person name="Tekaia F."/>
            <person name="Turner G."/>
            <person name="Vazquez de Aldana C.R."/>
            <person name="Weidman J."/>
            <person name="White O."/>
            <person name="Woodward J.R."/>
            <person name="Yu J.-H."/>
            <person name="Fraser C.M."/>
            <person name="Galagan J.E."/>
            <person name="Asai K."/>
            <person name="Machida M."/>
            <person name="Hall N."/>
            <person name="Barrell B.G."/>
            <person name="Denning D.W."/>
        </authorList>
    </citation>
    <scope>NUCLEOTIDE SEQUENCE [LARGE SCALE GENOMIC DNA]</scope>
    <source>
        <strain>ATCC MYA-4609 / CBS 101355 / FGSC A1100 / Af293</strain>
    </source>
</reference>
<proteinExistence type="inferred from homology"/>
<protein>
    <recommendedName>
        <fullName>Pre-mRNA-splicing factor spp2</fullName>
    </recommendedName>
</protein>
<sequence>MSSSESPKDGKPSSKPFSLSLSGSGSNGRSRKSAFNIPPARAAEPPSRTLARRPHRLHDDESDEEEAPPAFEDVAGFDTHTGTVLSADGRAVDKEKRELVIPVTSKNNWRDRVRANRGTRGKNLLPKEVQAMQEAERRGETAENDQETDRPSMSYGLSFAKPSQGEETKPGEDQAMKDAGPLKPQVVDERKPLTQDEIALQALIRESKGETEGRTDLVIESAKREVDESYPVRLDETGSFRVDVASRPEPATLDQYNAIPVEEFGAALLRGMGWKEGQSIGRGKYGTSATDYRSQSPRIPERRPGFLGIGAKDVSGGKGAEAELGAWGRAAMRKGARKAETQGGEGNTQGVYMPVLMRNKKTGEYITEEELTALKKEGKAKKGDDDWRERRDRNLEKSGRMDILVAETITTMTAIGLTDGGRVLHGETEVCHPVIDSPGGESTTMKTAAGETTVIIATEIETETGAIVSGIKIETGIGIERGVVTGAADIGMMIGIARDIHPLMRLAGTDVIETAIETLNGEDMMINVSENAGQCFGLDRT</sequence>
<organism>
    <name type="scientific">Aspergillus fumigatus (strain ATCC MYA-4609 / CBS 101355 / FGSC A1100 / Af293)</name>
    <name type="common">Neosartorya fumigata</name>
    <dbReference type="NCBI Taxonomy" id="330879"/>
    <lineage>
        <taxon>Eukaryota</taxon>
        <taxon>Fungi</taxon>
        <taxon>Dikarya</taxon>
        <taxon>Ascomycota</taxon>
        <taxon>Pezizomycotina</taxon>
        <taxon>Eurotiomycetes</taxon>
        <taxon>Eurotiomycetidae</taxon>
        <taxon>Eurotiales</taxon>
        <taxon>Aspergillaceae</taxon>
        <taxon>Aspergillus</taxon>
        <taxon>Aspergillus subgen. Fumigati</taxon>
    </lineage>
</organism>
<comment type="function">
    <text evidence="1">Involved in spliceosome maturation and the first step of pre-mRNA splicing.</text>
</comment>
<comment type="subunit">
    <text evidence="1">Associated with the spliceosome.</text>
</comment>
<comment type="subcellular location">
    <subcellularLocation>
        <location evidence="1">Nucleus</location>
    </subcellularLocation>
</comment>
<comment type="similarity">
    <text evidence="4">Belongs to the SPP2 family.</text>
</comment>
<gene>
    <name type="primary">spp2</name>
    <name type="ORF">AFUA_4G07550</name>
</gene>
<feature type="chain" id="PRO_0000218520" description="Pre-mRNA-splicing factor spp2">
    <location>
        <begin position="1"/>
        <end position="541"/>
    </location>
</feature>
<feature type="domain" description="G-patch" evidence="2">
    <location>
        <begin position="261"/>
        <end position="307"/>
    </location>
</feature>
<feature type="region of interest" description="Disordered" evidence="3">
    <location>
        <begin position="1"/>
        <end position="90"/>
    </location>
</feature>
<feature type="region of interest" description="Disordered" evidence="3">
    <location>
        <begin position="111"/>
        <end position="181"/>
    </location>
</feature>
<feature type="region of interest" description="Disordered" evidence="3">
    <location>
        <begin position="285"/>
        <end position="312"/>
    </location>
</feature>
<feature type="compositionally biased region" description="Basic and acidic residues" evidence="3">
    <location>
        <begin position="1"/>
        <end position="12"/>
    </location>
</feature>
<feature type="compositionally biased region" description="Low complexity" evidence="3">
    <location>
        <begin position="13"/>
        <end position="28"/>
    </location>
</feature>
<feature type="compositionally biased region" description="Basic and acidic residues" evidence="3">
    <location>
        <begin position="164"/>
        <end position="176"/>
    </location>
</feature>
<feature type="compositionally biased region" description="Polar residues" evidence="3">
    <location>
        <begin position="287"/>
        <end position="297"/>
    </location>
</feature>
<dbReference type="EMBL" id="AAHF01000005">
    <property type="protein sequence ID" value="EAL90032.1"/>
    <property type="molecule type" value="Genomic_DNA"/>
</dbReference>
<dbReference type="RefSeq" id="XP_752070.1">
    <property type="nucleotide sequence ID" value="XM_746977.1"/>
</dbReference>
<dbReference type="STRING" id="330879.Q4WP02"/>
<dbReference type="EnsemblFungi" id="EAL90032">
    <property type="protein sequence ID" value="EAL90032"/>
    <property type="gene ID" value="AFUA_4G07550"/>
</dbReference>
<dbReference type="GeneID" id="3509006"/>
<dbReference type="KEGG" id="afm:AFUA_4G07550"/>
<dbReference type="VEuPathDB" id="FungiDB:Afu4g07550"/>
<dbReference type="eggNOG" id="ENOG502RZY8">
    <property type="taxonomic scope" value="Eukaryota"/>
</dbReference>
<dbReference type="HOGENOM" id="CLU_612662_0_0_1"/>
<dbReference type="InParanoid" id="Q4WP02"/>
<dbReference type="OMA" id="WLRANIR"/>
<dbReference type="OrthoDB" id="5577072at2759"/>
<dbReference type="Proteomes" id="UP000002530">
    <property type="component" value="Chromosome 4"/>
</dbReference>
<dbReference type="GO" id="GO:0005681">
    <property type="term" value="C:spliceosomal complex"/>
    <property type="evidence" value="ECO:0000318"/>
    <property type="project" value="GO_Central"/>
</dbReference>
<dbReference type="GO" id="GO:0003676">
    <property type="term" value="F:nucleic acid binding"/>
    <property type="evidence" value="ECO:0007669"/>
    <property type="project" value="InterPro"/>
</dbReference>
<dbReference type="GO" id="GO:0000398">
    <property type="term" value="P:mRNA splicing, via spliceosome"/>
    <property type="evidence" value="ECO:0000318"/>
    <property type="project" value="GO_Central"/>
</dbReference>
<dbReference type="InterPro" id="IPR000467">
    <property type="entry name" value="G_patch_dom"/>
</dbReference>
<dbReference type="InterPro" id="IPR045166">
    <property type="entry name" value="Spp2-like"/>
</dbReference>
<dbReference type="InterPro" id="IPR026822">
    <property type="entry name" value="Spp2/MOS2_G-patch"/>
</dbReference>
<dbReference type="PANTHER" id="PTHR15818">
    <property type="entry name" value="G PATCH AND KOW-CONTAINING"/>
    <property type="match status" value="1"/>
</dbReference>
<dbReference type="PANTHER" id="PTHR15818:SF2">
    <property type="entry name" value="G-PATCH DOMAIN AND KOW MOTIFS-CONTAINING PROTEIN"/>
    <property type="match status" value="1"/>
</dbReference>
<dbReference type="Pfam" id="PF12656">
    <property type="entry name" value="G-patch_2"/>
    <property type="match status" value="1"/>
</dbReference>
<dbReference type="PROSITE" id="PS50174">
    <property type="entry name" value="G_PATCH"/>
    <property type="match status" value="1"/>
</dbReference>
<accession>Q4WP02</accession>